<protein>
    <recommendedName>
        <fullName>Acetolactate synthase</fullName>
        <ecNumber>2.2.1.6</ecNumber>
    </recommendedName>
    <alternativeName>
        <fullName>ALS</fullName>
    </alternativeName>
    <alternativeName>
        <fullName>Acetohydroxy-acid synthase</fullName>
    </alternativeName>
</protein>
<comment type="catalytic activity">
    <reaction>
        <text>2 pyruvate + H(+) = (2S)-2-acetolactate + CO2</text>
        <dbReference type="Rhea" id="RHEA:25249"/>
        <dbReference type="ChEBI" id="CHEBI:15361"/>
        <dbReference type="ChEBI" id="CHEBI:15378"/>
        <dbReference type="ChEBI" id="CHEBI:16526"/>
        <dbReference type="ChEBI" id="CHEBI:58476"/>
        <dbReference type="EC" id="2.2.1.6"/>
    </reaction>
</comment>
<comment type="cofactor">
    <cofactor evidence="1">
        <name>Mg(2+)</name>
        <dbReference type="ChEBI" id="CHEBI:18420"/>
    </cofactor>
    <text evidence="1">Binds 1 Mg(2+) ion per subunit.</text>
</comment>
<comment type="cofactor">
    <cofactor evidence="1">
        <name>thiamine diphosphate</name>
        <dbReference type="ChEBI" id="CHEBI:58937"/>
    </cofactor>
    <text evidence="1">Binds 1 thiamine pyrophosphate per subunit.</text>
</comment>
<comment type="pathway">
    <text>Amino-acid biosynthesis; L-isoleucine biosynthesis; L-isoleucine from 2-oxobutanoate: step 1/4.</text>
</comment>
<comment type="pathway">
    <text>Amino-acid biosynthesis; L-valine biosynthesis; L-valine from pyruvate: step 1/4.</text>
</comment>
<comment type="similarity">
    <text evidence="3">Belongs to the TPP enzyme family.</text>
</comment>
<dbReference type="EC" id="2.2.1.6"/>
<dbReference type="EMBL" id="L49392">
    <property type="protein sequence ID" value="AAB38426.1"/>
    <property type="molecule type" value="Genomic_DNA"/>
</dbReference>
<dbReference type="PIR" id="JC5164">
    <property type="entry name" value="JC5164"/>
</dbReference>
<dbReference type="SMR" id="Q59498"/>
<dbReference type="UniPathway" id="UPA00047">
    <property type="reaction ID" value="UER00055"/>
</dbReference>
<dbReference type="UniPathway" id="UPA00049">
    <property type="reaction ID" value="UER00059"/>
</dbReference>
<dbReference type="GO" id="GO:0005948">
    <property type="term" value="C:acetolactate synthase complex"/>
    <property type="evidence" value="ECO:0007669"/>
    <property type="project" value="TreeGrafter"/>
</dbReference>
<dbReference type="GO" id="GO:0003984">
    <property type="term" value="F:acetolactate synthase activity"/>
    <property type="evidence" value="ECO:0007669"/>
    <property type="project" value="UniProtKB-EC"/>
</dbReference>
<dbReference type="GO" id="GO:0050660">
    <property type="term" value="F:flavin adenine dinucleotide binding"/>
    <property type="evidence" value="ECO:0007669"/>
    <property type="project" value="InterPro"/>
</dbReference>
<dbReference type="GO" id="GO:0000287">
    <property type="term" value="F:magnesium ion binding"/>
    <property type="evidence" value="ECO:0007669"/>
    <property type="project" value="InterPro"/>
</dbReference>
<dbReference type="GO" id="GO:0030976">
    <property type="term" value="F:thiamine pyrophosphate binding"/>
    <property type="evidence" value="ECO:0007669"/>
    <property type="project" value="InterPro"/>
</dbReference>
<dbReference type="GO" id="GO:0009097">
    <property type="term" value="P:isoleucine biosynthetic process"/>
    <property type="evidence" value="ECO:0007669"/>
    <property type="project" value="UniProtKB-UniPathway"/>
</dbReference>
<dbReference type="GO" id="GO:0009099">
    <property type="term" value="P:L-valine biosynthetic process"/>
    <property type="evidence" value="ECO:0007669"/>
    <property type="project" value="UniProtKB-UniPathway"/>
</dbReference>
<dbReference type="CDD" id="cd02015">
    <property type="entry name" value="TPP_AHAS"/>
    <property type="match status" value="1"/>
</dbReference>
<dbReference type="CDD" id="cd07035">
    <property type="entry name" value="TPP_PYR_POX_like"/>
    <property type="match status" value="1"/>
</dbReference>
<dbReference type="FunFam" id="3.40.50.1220:FF:000008">
    <property type="entry name" value="Acetolactate synthase"/>
    <property type="match status" value="1"/>
</dbReference>
<dbReference type="FunFam" id="3.40.50.970:FF:000007">
    <property type="entry name" value="Acetolactate synthase"/>
    <property type="match status" value="1"/>
</dbReference>
<dbReference type="FunFam" id="3.40.50.970:FF:000016">
    <property type="entry name" value="Acetolactate synthase"/>
    <property type="match status" value="1"/>
</dbReference>
<dbReference type="Gene3D" id="3.40.50.970">
    <property type="match status" value="2"/>
</dbReference>
<dbReference type="Gene3D" id="3.40.50.1220">
    <property type="entry name" value="TPP-binding domain"/>
    <property type="match status" value="1"/>
</dbReference>
<dbReference type="InterPro" id="IPR012846">
    <property type="entry name" value="Acetolactate_synth_lsu"/>
</dbReference>
<dbReference type="InterPro" id="IPR039368">
    <property type="entry name" value="AHAS_TPP"/>
</dbReference>
<dbReference type="InterPro" id="IPR029035">
    <property type="entry name" value="DHS-like_NAD/FAD-binding_dom"/>
</dbReference>
<dbReference type="InterPro" id="IPR029061">
    <property type="entry name" value="THDP-binding"/>
</dbReference>
<dbReference type="InterPro" id="IPR012000">
    <property type="entry name" value="Thiamin_PyroP_enz_cen_dom"/>
</dbReference>
<dbReference type="InterPro" id="IPR012001">
    <property type="entry name" value="Thiamin_PyroP_enz_TPP-bd_dom"/>
</dbReference>
<dbReference type="InterPro" id="IPR000399">
    <property type="entry name" value="TPP-bd_CS"/>
</dbReference>
<dbReference type="InterPro" id="IPR045229">
    <property type="entry name" value="TPP_enz"/>
</dbReference>
<dbReference type="InterPro" id="IPR011766">
    <property type="entry name" value="TPP_enzyme_TPP-bd"/>
</dbReference>
<dbReference type="NCBIfam" id="TIGR00118">
    <property type="entry name" value="acolac_lg"/>
    <property type="match status" value="1"/>
</dbReference>
<dbReference type="NCBIfam" id="NF005860">
    <property type="entry name" value="PRK07789.1"/>
    <property type="match status" value="1"/>
</dbReference>
<dbReference type="PANTHER" id="PTHR18968:SF13">
    <property type="entry name" value="ACETOLACTATE SYNTHASE CATALYTIC SUBUNIT, MITOCHONDRIAL"/>
    <property type="match status" value="1"/>
</dbReference>
<dbReference type="PANTHER" id="PTHR18968">
    <property type="entry name" value="THIAMINE PYROPHOSPHATE ENZYMES"/>
    <property type="match status" value="1"/>
</dbReference>
<dbReference type="Pfam" id="PF02775">
    <property type="entry name" value="TPP_enzyme_C"/>
    <property type="match status" value="1"/>
</dbReference>
<dbReference type="Pfam" id="PF00205">
    <property type="entry name" value="TPP_enzyme_M"/>
    <property type="match status" value="1"/>
</dbReference>
<dbReference type="Pfam" id="PF02776">
    <property type="entry name" value="TPP_enzyme_N"/>
    <property type="match status" value="1"/>
</dbReference>
<dbReference type="SUPFAM" id="SSF52467">
    <property type="entry name" value="DHS-like NAD/FAD-binding domain"/>
    <property type="match status" value="1"/>
</dbReference>
<dbReference type="SUPFAM" id="SSF52518">
    <property type="entry name" value="Thiamin diphosphate-binding fold (THDP-binding)"/>
    <property type="match status" value="2"/>
</dbReference>
<dbReference type="PROSITE" id="PS00187">
    <property type="entry name" value="TPP_ENZYMES"/>
    <property type="match status" value="1"/>
</dbReference>
<organism>
    <name type="scientific">Mycobacterium avium</name>
    <dbReference type="NCBI Taxonomy" id="1764"/>
    <lineage>
        <taxon>Bacteria</taxon>
        <taxon>Bacillati</taxon>
        <taxon>Actinomycetota</taxon>
        <taxon>Actinomycetes</taxon>
        <taxon>Mycobacteriales</taxon>
        <taxon>Mycobacteriaceae</taxon>
        <taxon>Mycobacterium</taxon>
        <taxon>Mycobacterium avium complex (MAC)</taxon>
    </lineage>
</organism>
<name>ILVB_MYCAV</name>
<accession>Q59498</accession>
<reference key="1">
    <citation type="journal article" date="1996" name="Gene">
        <title>Cloning and sequencing of the ilvBNC gene cluster from Mycobacterium avium.</title>
        <authorList>
            <person name="Gusberti L."/>
            <person name="Cantoni R."/>
            <person name="de Rossi E."/>
            <person name="Branzoni M."/>
            <person name="Riccardi G."/>
        </authorList>
    </citation>
    <scope>NUCLEOTIDE SEQUENCE [GENOMIC DNA]</scope>
</reference>
<gene>
    <name type="primary">ilvB</name>
</gene>
<evidence type="ECO:0000250" key="1"/>
<evidence type="ECO:0000256" key="2">
    <source>
        <dbReference type="SAM" id="MobiDB-lite"/>
    </source>
</evidence>
<evidence type="ECO:0000305" key="3"/>
<sequence length="621" mass="65913">MSAPTRRPAPDAPGAAGIAPAPPAPAAKPAAGKPKRIGPEQVTGAQSVIRSLEELGVEVIFGIPGGAVLPVYDPLFDSKKLRHVLVRHEQGAGHAASGYAHATGKVGVCMATSGPGATNLVTALADAQMDSIPVVAVTGQVGRTLIGTDAFQEADISGITMPITKHNFLVVRQRNPAVLAEAFHIAASGRPARCSVDIPKDVLQGQCTFSWPPRIHLPGYKPTTKPHSRQIRERAKLIAAARKPVLYVGGGVIRGEASEQLRELAELTGIPVVTTLMARGAFPDSHRQHLGMPGMHGTVAAVAALQRSDLLIALGTRFDDRVTGKLDTFAPEAKVIHADIDPAEIGKNRHADVPIVGDVKAVIAELVEILRHDGAPGNLDIADWWAYLDDVQSTYPLSYGPQSDGSLGPEYVIEKLGQIAGPDALYVAGVGHDQMWAAQFISYEKPRTWLNSGGQGTMGFAIPAAMGAKMGRPEAEVWAIDGDGCFQMTNQELATCAVEGIPIKVALINNGNLGMVRQWQTLFYEERYSQTDLGHPLAPHPDFVKLAEALGCVGLRCEREEDVVDVINAARAINDRPVVIAFIVGADAQVWPMVAAGTSNDEIQAARGIRPLFDDETEGTP</sequence>
<keyword id="KW-0028">Amino-acid biosynthesis</keyword>
<keyword id="KW-0100">Branched-chain amino acid biosynthesis</keyword>
<keyword id="KW-0274">FAD</keyword>
<keyword id="KW-0285">Flavoprotein</keyword>
<keyword id="KW-0460">Magnesium</keyword>
<keyword id="KW-0479">Metal-binding</keyword>
<keyword id="KW-0786">Thiamine pyrophosphate</keyword>
<keyword id="KW-0808">Transferase</keyword>
<proteinExistence type="inferred from homology"/>
<feature type="chain" id="PRO_0000090800" description="Acetolactate synthase">
    <location>
        <begin position="1"/>
        <end position="621"/>
    </location>
</feature>
<feature type="region of interest" description="Disordered" evidence="2">
    <location>
        <begin position="1"/>
        <end position="39"/>
    </location>
</feature>
<feature type="region of interest" description="Thiamine pyrophosphate binding">
    <location>
        <begin position="432"/>
        <end position="512"/>
    </location>
</feature>
<feature type="compositionally biased region" description="Low complexity" evidence="2">
    <location>
        <begin position="1"/>
        <end position="19"/>
    </location>
</feature>
<feature type="binding site" evidence="1">
    <location>
        <position position="89"/>
    </location>
    <ligand>
        <name>thiamine diphosphate</name>
        <dbReference type="ChEBI" id="CHEBI:58937"/>
    </ligand>
</feature>
<feature type="binding site" evidence="1">
    <location>
        <position position="190"/>
    </location>
    <ligand>
        <name>FAD</name>
        <dbReference type="ChEBI" id="CHEBI:57692"/>
    </ligand>
</feature>
<feature type="binding site" evidence="1">
    <location>
        <begin position="296"/>
        <end position="317"/>
    </location>
    <ligand>
        <name>FAD</name>
        <dbReference type="ChEBI" id="CHEBI:57692"/>
    </ligand>
</feature>
<feature type="binding site" evidence="1">
    <location>
        <begin position="339"/>
        <end position="358"/>
    </location>
    <ligand>
        <name>FAD</name>
        <dbReference type="ChEBI" id="CHEBI:57692"/>
    </ligand>
</feature>
<feature type="binding site" evidence="1">
    <location>
        <position position="483"/>
    </location>
    <ligand>
        <name>Mg(2+)</name>
        <dbReference type="ChEBI" id="CHEBI:18420"/>
    </ligand>
</feature>
<feature type="binding site" evidence="1">
    <location>
        <position position="510"/>
    </location>
    <ligand>
        <name>Mg(2+)</name>
        <dbReference type="ChEBI" id="CHEBI:18420"/>
    </ligand>
</feature>